<reference key="1">
    <citation type="submission" date="2002-12" db="EMBL/GenBank/DDBJ databases">
        <title>Complete genome sequence of Vibrio vulnificus CMCP6.</title>
        <authorList>
            <person name="Rhee J.H."/>
            <person name="Kim S.Y."/>
            <person name="Chung S.S."/>
            <person name="Kim J.J."/>
            <person name="Moon Y.H."/>
            <person name="Jeong H."/>
            <person name="Choy H.E."/>
        </authorList>
    </citation>
    <scope>NUCLEOTIDE SEQUENCE [LARGE SCALE GENOMIC DNA]</scope>
    <source>
        <strain>CMCP6</strain>
    </source>
</reference>
<evidence type="ECO:0000255" key="1">
    <source>
        <dbReference type="HAMAP-Rule" id="MF_00346"/>
    </source>
</evidence>
<name>Y1551_VIBVU</name>
<accession>Q8DC90</accession>
<dbReference type="EMBL" id="AE016795">
    <property type="protein sequence ID" value="AAO09975.1"/>
    <property type="molecule type" value="Genomic_DNA"/>
</dbReference>
<dbReference type="RefSeq" id="WP_011079486.1">
    <property type="nucleotide sequence ID" value="NC_004459.3"/>
</dbReference>
<dbReference type="SMR" id="Q8DC90"/>
<dbReference type="KEGG" id="vvu:VV1_1551"/>
<dbReference type="HOGENOM" id="CLU_085336_1_0_6"/>
<dbReference type="Proteomes" id="UP000002275">
    <property type="component" value="Chromosome 1"/>
</dbReference>
<dbReference type="GO" id="GO:0005829">
    <property type="term" value="C:cytosol"/>
    <property type="evidence" value="ECO:0007669"/>
    <property type="project" value="TreeGrafter"/>
</dbReference>
<dbReference type="Gene3D" id="1.20.120.740">
    <property type="entry name" value="YgfB uncharacterised protein family UPF0149, PF03695"/>
    <property type="match status" value="1"/>
</dbReference>
<dbReference type="HAMAP" id="MF_00346">
    <property type="entry name" value="UPF0149"/>
    <property type="match status" value="1"/>
</dbReference>
<dbReference type="InterPro" id="IPR011978">
    <property type="entry name" value="YgfB-like"/>
</dbReference>
<dbReference type="InterPro" id="IPR036255">
    <property type="entry name" value="YgfB-like_sf"/>
</dbReference>
<dbReference type="NCBIfam" id="NF002477">
    <property type="entry name" value="PRK01736.1"/>
    <property type="match status" value="1"/>
</dbReference>
<dbReference type="NCBIfam" id="TIGR02292">
    <property type="entry name" value="ygfB_yecA"/>
    <property type="match status" value="1"/>
</dbReference>
<dbReference type="PANTHER" id="PTHR37528">
    <property type="entry name" value="UPF0149 PROTEIN YGFB"/>
    <property type="match status" value="1"/>
</dbReference>
<dbReference type="PANTHER" id="PTHR37528:SF1">
    <property type="entry name" value="UPF0149 PROTEIN YGFB"/>
    <property type="match status" value="1"/>
</dbReference>
<dbReference type="Pfam" id="PF03695">
    <property type="entry name" value="UPF0149"/>
    <property type="match status" value="1"/>
</dbReference>
<dbReference type="SUPFAM" id="SSF101327">
    <property type="entry name" value="YgfB-like"/>
    <property type="match status" value="1"/>
</dbReference>
<protein>
    <recommendedName>
        <fullName evidence="1">UPF0149 protein VV1_1551</fullName>
    </recommendedName>
</protein>
<comment type="similarity">
    <text evidence="1">Belongs to the UPF0149 family.</text>
</comment>
<proteinExistence type="inferred from homology"/>
<sequence length="191" mass="20547">MSKNQLPSYQVVADEMKMATLAVTPAELHGLLAGLISGGLSQQDQSWQPMLFDYTNDGMGWPSAALEQAQALFNVTSAQLTSDEMVLNLLLPNAEGEEAIFALADALSDWVNHYISGLGLAGAAFNKASEEAKEALADLEEMARLGVDEDDDLQEQAELLEQVIEHVKACTLLIHAEFGAKTSSSETPTIH</sequence>
<feature type="chain" id="PRO_0000207572" description="UPF0149 protein VV1_1551">
    <location>
        <begin position="1"/>
        <end position="191"/>
    </location>
</feature>
<organism>
    <name type="scientific">Vibrio vulnificus (strain CMCP6)</name>
    <dbReference type="NCBI Taxonomy" id="216895"/>
    <lineage>
        <taxon>Bacteria</taxon>
        <taxon>Pseudomonadati</taxon>
        <taxon>Pseudomonadota</taxon>
        <taxon>Gammaproteobacteria</taxon>
        <taxon>Vibrionales</taxon>
        <taxon>Vibrionaceae</taxon>
        <taxon>Vibrio</taxon>
    </lineage>
</organism>
<gene>
    <name type="ordered locus">VV1_1551</name>
</gene>